<accession>A1JI88</accession>
<dbReference type="EMBL" id="AM286415">
    <property type="protein sequence ID" value="CAL10326.1"/>
    <property type="molecule type" value="Genomic_DNA"/>
</dbReference>
<dbReference type="RefSeq" id="WP_011815340.1">
    <property type="nucleotide sequence ID" value="NC_008800.1"/>
</dbReference>
<dbReference type="RefSeq" id="YP_001004578.1">
    <property type="nucleotide sequence ID" value="NC_008800.1"/>
</dbReference>
<dbReference type="SMR" id="A1JI88"/>
<dbReference type="GeneID" id="93969141"/>
<dbReference type="KEGG" id="yen:YE0190"/>
<dbReference type="PATRIC" id="fig|393305.7.peg.280"/>
<dbReference type="eggNOG" id="COG1965">
    <property type="taxonomic scope" value="Bacteria"/>
</dbReference>
<dbReference type="HOGENOM" id="CLU_080880_3_0_6"/>
<dbReference type="OrthoDB" id="285675at2"/>
<dbReference type="Proteomes" id="UP000000642">
    <property type="component" value="Chromosome"/>
</dbReference>
<dbReference type="GO" id="GO:0005829">
    <property type="term" value="C:cytosol"/>
    <property type="evidence" value="ECO:0007669"/>
    <property type="project" value="TreeGrafter"/>
</dbReference>
<dbReference type="GO" id="GO:0008199">
    <property type="term" value="F:ferric iron binding"/>
    <property type="evidence" value="ECO:0007669"/>
    <property type="project" value="InterPro"/>
</dbReference>
<dbReference type="GO" id="GO:0008198">
    <property type="term" value="F:ferrous iron binding"/>
    <property type="evidence" value="ECO:0007669"/>
    <property type="project" value="TreeGrafter"/>
</dbReference>
<dbReference type="GO" id="GO:0016226">
    <property type="term" value="P:iron-sulfur cluster assembly"/>
    <property type="evidence" value="ECO:0007669"/>
    <property type="project" value="UniProtKB-UniRule"/>
</dbReference>
<dbReference type="CDD" id="cd00503">
    <property type="entry name" value="Frataxin"/>
    <property type="match status" value="1"/>
</dbReference>
<dbReference type="Gene3D" id="3.30.920.10">
    <property type="entry name" value="Frataxin/CyaY"/>
    <property type="match status" value="1"/>
</dbReference>
<dbReference type="HAMAP" id="MF_00142">
    <property type="entry name" value="CyaY"/>
    <property type="match status" value="1"/>
</dbReference>
<dbReference type="InterPro" id="IPR047584">
    <property type="entry name" value="CyaY"/>
</dbReference>
<dbReference type="InterPro" id="IPR002908">
    <property type="entry name" value="Frataxin/CyaY"/>
</dbReference>
<dbReference type="InterPro" id="IPR036524">
    <property type="entry name" value="Frataxin/CyaY_sf"/>
</dbReference>
<dbReference type="InterPro" id="IPR020895">
    <property type="entry name" value="Frataxin_CS"/>
</dbReference>
<dbReference type="NCBIfam" id="TIGR03421">
    <property type="entry name" value="FeS_CyaY"/>
    <property type="match status" value="1"/>
</dbReference>
<dbReference type="PANTHER" id="PTHR16821">
    <property type="entry name" value="FRATAXIN"/>
    <property type="match status" value="1"/>
</dbReference>
<dbReference type="PANTHER" id="PTHR16821:SF2">
    <property type="entry name" value="FRATAXIN, MITOCHONDRIAL"/>
    <property type="match status" value="1"/>
</dbReference>
<dbReference type="Pfam" id="PF01491">
    <property type="entry name" value="Frataxin_Cyay"/>
    <property type="match status" value="1"/>
</dbReference>
<dbReference type="SMART" id="SM01219">
    <property type="entry name" value="Frataxin_Cyay"/>
    <property type="match status" value="1"/>
</dbReference>
<dbReference type="SUPFAM" id="SSF55387">
    <property type="entry name" value="Frataxin/Nqo15-like"/>
    <property type="match status" value="1"/>
</dbReference>
<dbReference type="PROSITE" id="PS01344">
    <property type="entry name" value="FRATAXIN_1"/>
    <property type="match status" value="1"/>
</dbReference>
<dbReference type="PROSITE" id="PS50810">
    <property type="entry name" value="FRATAXIN_2"/>
    <property type="match status" value="1"/>
</dbReference>
<organism>
    <name type="scientific">Yersinia enterocolitica serotype O:8 / biotype 1B (strain NCTC 13174 / 8081)</name>
    <dbReference type="NCBI Taxonomy" id="393305"/>
    <lineage>
        <taxon>Bacteria</taxon>
        <taxon>Pseudomonadati</taxon>
        <taxon>Pseudomonadota</taxon>
        <taxon>Gammaproteobacteria</taxon>
        <taxon>Enterobacterales</taxon>
        <taxon>Yersiniaceae</taxon>
        <taxon>Yersinia</taxon>
    </lineage>
</organism>
<protein>
    <recommendedName>
        <fullName evidence="1">Iron-sulfur cluster assembly protein CyaY</fullName>
    </recommendedName>
</protein>
<feature type="chain" id="PRO_1000010966" description="Iron-sulfur cluster assembly protein CyaY">
    <location>
        <begin position="1"/>
        <end position="106"/>
    </location>
</feature>
<reference key="1">
    <citation type="journal article" date="2006" name="PLoS Genet.">
        <title>The complete genome sequence and comparative genome analysis of the high pathogenicity Yersinia enterocolitica strain 8081.</title>
        <authorList>
            <person name="Thomson N.R."/>
            <person name="Howard S."/>
            <person name="Wren B.W."/>
            <person name="Holden M.T.G."/>
            <person name="Crossman L."/>
            <person name="Challis G.L."/>
            <person name="Churcher C."/>
            <person name="Mungall K."/>
            <person name="Brooks K."/>
            <person name="Chillingworth T."/>
            <person name="Feltwell T."/>
            <person name="Abdellah Z."/>
            <person name="Hauser H."/>
            <person name="Jagels K."/>
            <person name="Maddison M."/>
            <person name="Moule S."/>
            <person name="Sanders M."/>
            <person name="Whitehead S."/>
            <person name="Quail M.A."/>
            <person name="Dougan G."/>
            <person name="Parkhill J."/>
            <person name="Prentice M.B."/>
        </authorList>
    </citation>
    <scope>NUCLEOTIDE SEQUENCE [LARGE SCALE GENOMIC DNA]</scope>
    <source>
        <strain>NCTC 13174 / 8081</strain>
    </source>
</reference>
<comment type="function">
    <text evidence="1">Involved in iron-sulfur (Fe-S) cluster assembly. May act as a regulator of Fe-S biogenesis.</text>
</comment>
<comment type="similarity">
    <text evidence="1">Belongs to the frataxin family.</text>
</comment>
<evidence type="ECO:0000255" key="1">
    <source>
        <dbReference type="HAMAP-Rule" id="MF_00142"/>
    </source>
</evidence>
<keyword id="KW-0408">Iron</keyword>
<keyword id="KW-0479">Metal-binding</keyword>
<proteinExistence type="inferred from homology"/>
<gene>
    <name evidence="1" type="primary">cyaY</name>
    <name type="ordered locus">YE0190</name>
</gene>
<sequence length="106" mass="11908">MNDSEFHQLADQLMLCIEETLDGFSGDSDIDYETNGGVMTLTFENGSKIVINRQEPLHQVWLATKAGGYHFDYREGHWYCSRSGEEFFTKLSEAATAQAGEVVSFS</sequence>
<name>CYAY_YERE8</name>